<feature type="chain" id="PRO_0000428356" description="RNA polymerase sigma factor SigB">
    <location>
        <begin position="1"/>
        <end position="323"/>
    </location>
</feature>
<feature type="DNA-binding region" description="H-T-H motif" evidence="1">
    <location>
        <begin position="284"/>
        <end position="303"/>
    </location>
</feature>
<feature type="region of interest" description="Sufficient to interact with RbpA">
    <location>
        <begin position="1"/>
        <end position="228"/>
    </location>
</feature>
<feature type="region of interest" description="Sigma-70 factor domain-1">
    <location>
        <begin position="25"/>
        <end position="59"/>
    </location>
</feature>
<feature type="region of interest" description="Sigma-70 factor domain-2">
    <location>
        <begin position="90"/>
        <end position="160"/>
    </location>
</feature>
<feature type="region of interest" description="Sigma-70 factor domain-3">
    <location>
        <begin position="169"/>
        <end position="245"/>
    </location>
</feature>
<feature type="region of interest" description="Sigma-70 factor domain-4">
    <location>
        <begin position="258"/>
        <end position="311"/>
    </location>
</feature>
<feature type="short sequence motif" description="Polymerase core binding" evidence="2">
    <location>
        <begin position="114"/>
        <end position="117"/>
    </location>
</feature>
<organism>
    <name type="scientific">Mycobacterium tuberculosis (strain CDC 1551 / Oshkosh)</name>
    <dbReference type="NCBI Taxonomy" id="83331"/>
    <lineage>
        <taxon>Bacteria</taxon>
        <taxon>Bacillati</taxon>
        <taxon>Actinomycetota</taxon>
        <taxon>Actinomycetes</taxon>
        <taxon>Mycobacteriales</taxon>
        <taxon>Mycobacteriaceae</taxon>
        <taxon>Mycobacterium</taxon>
        <taxon>Mycobacterium tuberculosis complex</taxon>
    </lineage>
</organism>
<gene>
    <name type="primary">sigB</name>
    <name type="synonym">mysB</name>
    <name type="ordered locus">MT2783</name>
</gene>
<protein>
    <recommendedName>
        <fullName>RNA polymerase sigma factor SigB</fullName>
    </recommendedName>
</protein>
<dbReference type="EMBL" id="AE000516">
    <property type="protein sequence ID" value="AAK47099.1"/>
    <property type="molecule type" value="Genomic_DNA"/>
</dbReference>
<dbReference type="PIR" id="JC5011">
    <property type="entry name" value="JC5011"/>
</dbReference>
<dbReference type="RefSeq" id="WP_003413958.1">
    <property type="nucleotide sequence ID" value="NZ_KK341227.1"/>
</dbReference>
<dbReference type="EMDB" id="EMD-14696"/>
<dbReference type="EMDB" id="EMD-14697"/>
<dbReference type="SMR" id="P9WGI4"/>
<dbReference type="GeneID" id="45426697"/>
<dbReference type="KEGG" id="mtc:MT2783"/>
<dbReference type="PATRIC" id="fig|83331.31.peg.2996"/>
<dbReference type="HOGENOM" id="CLU_014793_3_4_11"/>
<dbReference type="Proteomes" id="UP000001020">
    <property type="component" value="Chromosome"/>
</dbReference>
<dbReference type="GO" id="GO:0003677">
    <property type="term" value="F:DNA binding"/>
    <property type="evidence" value="ECO:0007669"/>
    <property type="project" value="UniProtKB-KW"/>
</dbReference>
<dbReference type="GO" id="GO:0016987">
    <property type="term" value="F:sigma factor activity"/>
    <property type="evidence" value="ECO:0007669"/>
    <property type="project" value="UniProtKB-KW"/>
</dbReference>
<dbReference type="GO" id="GO:0006352">
    <property type="term" value="P:DNA-templated transcription initiation"/>
    <property type="evidence" value="ECO:0007669"/>
    <property type="project" value="InterPro"/>
</dbReference>
<dbReference type="CDD" id="cd06171">
    <property type="entry name" value="Sigma70_r4"/>
    <property type="match status" value="1"/>
</dbReference>
<dbReference type="FunFam" id="1.10.10.10:FF:000004">
    <property type="entry name" value="RNA polymerase sigma factor SigA"/>
    <property type="match status" value="1"/>
</dbReference>
<dbReference type="FunFam" id="1.10.601.10:FF:000001">
    <property type="entry name" value="RNA polymerase sigma factor SigA"/>
    <property type="match status" value="1"/>
</dbReference>
<dbReference type="Gene3D" id="1.10.601.10">
    <property type="entry name" value="RNA Polymerase Primary Sigma Factor"/>
    <property type="match status" value="2"/>
</dbReference>
<dbReference type="Gene3D" id="1.10.10.10">
    <property type="entry name" value="Winged helix-like DNA-binding domain superfamily/Winged helix DNA-binding domain"/>
    <property type="match status" value="2"/>
</dbReference>
<dbReference type="InterPro" id="IPR014284">
    <property type="entry name" value="RNA_pol_sigma-70_dom"/>
</dbReference>
<dbReference type="InterPro" id="IPR000943">
    <property type="entry name" value="RNA_pol_sigma70"/>
</dbReference>
<dbReference type="InterPro" id="IPR009042">
    <property type="entry name" value="RNA_pol_sigma70_r1_2"/>
</dbReference>
<dbReference type="InterPro" id="IPR007627">
    <property type="entry name" value="RNA_pol_sigma70_r2"/>
</dbReference>
<dbReference type="InterPro" id="IPR007624">
    <property type="entry name" value="RNA_pol_sigma70_r3"/>
</dbReference>
<dbReference type="InterPro" id="IPR007630">
    <property type="entry name" value="RNA_pol_sigma70_r4"/>
</dbReference>
<dbReference type="InterPro" id="IPR013325">
    <property type="entry name" value="RNA_pol_sigma_r2"/>
</dbReference>
<dbReference type="InterPro" id="IPR013324">
    <property type="entry name" value="RNA_pol_sigma_r3/r4-like"/>
</dbReference>
<dbReference type="InterPro" id="IPR050239">
    <property type="entry name" value="Sigma-70_RNA_pol_init_factors"/>
</dbReference>
<dbReference type="InterPro" id="IPR036388">
    <property type="entry name" value="WH-like_DNA-bd_sf"/>
</dbReference>
<dbReference type="NCBIfam" id="NF005920">
    <property type="entry name" value="PRK07921.1"/>
    <property type="match status" value="1"/>
</dbReference>
<dbReference type="NCBIfam" id="TIGR02937">
    <property type="entry name" value="sigma70-ECF"/>
    <property type="match status" value="1"/>
</dbReference>
<dbReference type="PANTHER" id="PTHR30603">
    <property type="entry name" value="RNA POLYMERASE SIGMA FACTOR RPO"/>
    <property type="match status" value="1"/>
</dbReference>
<dbReference type="PANTHER" id="PTHR30603:SF60">
    <property type="entry name" value="RNA POLYMERASE SIGMA FACTOR RPOD"/>
    <property type="match status" value="1"/>
</dbReference>
<dbReference type="Pfam" id="PF00140">
    <property type="entry name" value="Sigma70_r1_2"/>
    <property type="match status" value="1"/>
</dbReference>
<dbReference type="Pfam" id="PF04542">
    <property type="entry name" value="Sigma70_r2"/>
    <property type="match status" value="1"/>
</dbReference>
<dbReference type="Pfam" id="PF04539">
    <property type="entry name" value="Sigma70_r3"/>
    <property type="match status" value="1"/>
</dbReference>
<dbReference type="Pfam" id="PF04545">
    <property type="entry name" value="Sigma70_r4"/>
    <property type="match status" value="1"/>
</dbReference>
<dbReference type="PRINTS" id="PR00046">
    <property type="entry name" value="SIGMA70FCT"/>
</dbReference>
<dbReference type="SUPFAM" id="SSF88946">
    <property type="entry name" value="Sigma2 domain of RNA polymerase sigma factors"/>
    <property type="match status" value="1"/>
</dbReference>
<dbReference type="SUPFAM" id="SSF88659">
    <property type="entry name" value="Sigma3 and sigma4 domains of RNA polymerase sigma factors"/>
    <property type="match status" value="2"/>
</dbReference>
<dbReference type="PROSITE" id="PS00715">
    <property type="entry name" value="SIGMA70_1"/>
    <property type="match status" value="1"/>
</dbReference>
<dbReference type="PROSITE" id="PS00716">
    <property type="entry name" value="SIGMA70_2"/>
    <property type="match status" value="1"/>
</dbReference>
<evidence type="ECO:0000250" key="1"/>
<evidence type="ECO:0000255" key="2"/>
<evidence type="ECO:0000305" key="3"/>
<name>SIGB_MYCTO</name>
<reference key="1">
    <citation type="journal article" date="2002" name="J. Bacteriol.">
        <title>Whole-genome comparison of Mycobacterium tuberculosis clinical and laboratory strains.</title>
        <authorList>
            <person name="Fleischmann R.D."/>
            <person name="Alland D."/>
            <person name="Eisen J.A."/>
            <person name="Carpenter L."/>
            <person name="White O."/>
            <person name="Peterson J.D."/>
            <person name="DeBoy R.T."/>
            <person name="Dodson R.J."/>
            <person name="Gwinn M.L."/>
            <person name="Haft D.H."/>
            <person name="Hickey E.K."/>
            <person name="Kolonay J.F."/>
            <person name="Nelson W.C."/>
            <person name="Umayam L.A."/>
            <person name="Ermolaeva M.D."/>
            <person name="Salzberg S.L."/>
            <person name="Delcher A."/>
            <person name="Utterback T.R."/>
            <person name="Weidman J.F."/>
            <person name="Khouri H.M."/>
            <person name="Gill J."/>
            <person name="Mikula A."/>
            <person name="Bishai W."/>
            <person name="Jacobs W.R. Jr."/>
            <person name="Venter J.C."/>
            <person name="Fraser C.M."/>
        </authorList>
    </citation>
    <scope>NUCLEOTIDE SEQUENCE [LARGE SCALE GENOMIC DNA]</scope>
    <source>
        <strain>CDC 1551 / Oshkosh</strain>
    </source>
</reference>
<accession>P9WGI4</accession>
<accession>O08496</accession>
<accession>O08514</accession>
<accession>Q59563</accession>
<accession>Q79FB5</accession>
<accession>Q7D6Q4</accession>
<comment type="function">
    <text evidence="1">Sigma factors are initiation factors that promote the attachment of RNA polymerase to specific initiation sites and are then released. A non-essential principal sigma factor that responds to cell envelope stress and hypoxia (By similarity).</text>
</comment>
<comment type="subunit">
    <text evidence="1 3">Monomer (Probable). Interacts transiently with the RNA polymerase catalytic core formed by RpoA, RpoB, RpoC and RpoZ (2 alpha, 1 beta, 1 beta' and 1 omega subunit) to form the RNA polymerase holoenzyme that can initiate transcription (By similarity).</text>
</comment>
<comment type="domain">
    <text evidence="1">The sigma-70 factor domain-2 mediates sequence-specific interaction with the -10 element in promoter DNA, and plays an important role in melting the double-stranded DNA and the formation of the transcription bubble. The sigma-70 factor domain-2 mediates interaction with the RNA polymerase subunits RpoB and RpoC (By similarity).</text>
</comment>
<comment type="domain">
    <text evidence="1">The sigma-70 factor domain-4 contains a helix-turn-helix (H-T-H) motif that mediates interaction with the -35 element in promoter DNA. The domain also mediates interaction with the RNA polymerase subunit RpoA (By similarity).</text>
</comment>
<comment type="similarity">
    <text evidence="3">Belongs to the sigma-70 factor family.</text>
</comment>
<keyword id="KW-0238">DNA-binding</keyword>
<keyword id="KW-1185">Reference proteome</keyword>
<keyword id="KW-0731">Sigma factor</keyword>
<keyword id="KW-0346">Stress response</keyword>
<keyword id="KW-0804">Transcription</keyword>
<keyword id="KW-0805">Transcription regulation</keyword>
<proteinExistence type="inferred from homology"/>
<sequence>MADAPTRATTSRVDSDLDAQSPAADLVRVYLNGIGKTALLNAAGEVELAKRIEAGLYAEHLLETRKRLGENRKRDLAAVVRDGEAARRHLLEANLRLVVSLAKRYTGRGMPLLDLIQEGNLGLIRAMEKFDYTKGFKFSTYATWWIRQAITRGMADQSRTIRLPVHLVEQVNKLARIKREMHQHLGREATDEELAAESGIPIDKINDLLEHSRDPVSLDMPVGSEEEAPLGDFIEDAEAMSAENAVIAELLHTDIRSVLATLDEREHQVIRLRFGLDDGQPRTLDQIGKLFGLSRERVRQIERDVMSKLRHGERADRLRSYAS</sequence>